<proteinExistence type="inferred from homology"/>
<sequence>MSLPATFDLTPEDAQLLLAANTHLGARNVQVHQEPYVFNARPDGVHVINVGKTWEKLVLAARIIAAIPNPEDVVAISSRTFGQRAVLKFAAHTGATPIAGRFTPGSFTNYITRSFKEPRLVIVTDPRSDAQAIKEASYVNIPVIALTDLDSPSEFVDVAIPCNNRGKHSIGLIWYLLAREVLRLRGALVDRTQPWSIMPDLYFYRDPEEVEQQVAEEATTEEAGEEEAKEEVTEEQAEATEWAEENADNVEW</sequence>
<feature type="initiator methionine" description="Removed" evidence="2">
    <location>
        <position position="1"/>
    </location>
</feature>
<feature type="chain" id="PRO_0000371647" description="Small ribosomal subunit protein uS2A">
    <location>
        <begin position="2"/>
        <end position="252"/>
    </location>
</feature>
<feature type="region of interest" description="Disordered" evidence="3">
    <location>
        <begin position="209"/>
        <end position="252"/>
    </location>
</feature>
<feature type="compositionally biased region" description="Acidic residues" evidence="3">
    <location>
        <begin position="218"/>
        <end position="252"/>
    </location>
</feature>
<feature type="modified residue" description="N-acetylserine" evidence="1 2">
    <location>
        <position position="2"/>
    </location>
</feature>
<organism>
    <name type="scientific">Saccharomyces cerevisiae (strain YJM789)</name>
    <name type="common">Baker's yeast</name>
    <dbReference type="NCBI Taxonomy" id="307796"/>
    <lineage>
        <taxon>Eukaryota</taxon>
        <taxon>Fungi</taxon>
        <taxon>Dikarya</taxon>
        <taxon>Ascomycota</taxon>
        <taxon>Saccharomycotina</taxon>
        <taxon>Saccharomycetes</taxon>
        <taxon>Saccharomycetales</taxon>
        <taxon>Saccharomycetaceae</taxon>
        <taxon>Saccharomyces</taxon>
    </lineage>
</organism>
<accession>A6ZUM5</accession>
<protein>
    <recommendedName>
        <fullName evidence="2">Small ribosomal subunit protein uS2A</fullName>
    </recommendedName>
    <alternativeName>
        <fullName evidence="4">40S ribosomal protein S0-A</fullName>
    </alternativeName>
    <alternativeName>
        <fullName>Nucleic acid-binding protein NAB1A</fullName>
    </alternativeName>
</protein>
<evidence type="ECO:0000250" key="1">
    <source>
        <dbReference type="UniProtKB" id="P32905"/>
    </source>
</evidence>
<evidence type="ECO:0000255" key="2">
    <source>
        <dbReference type="HAMAP-Rule" id="MF_03015"/>
    </source>
</evidence>
<evidence type="ECO:0000256" key="3">
    <source>
        <dbReference type="SAM" id="MobiDB-lite"/>
    </source>
</evidence>
<evidence type="ECO:0000305" key="4"/>
<reference key="1">
    <citation type="journal article" date="2007" name="Proc. Natl. Acad. Sci. U.S.A.">
        <title>Genome sequencing and comparative analysis of Saccharomyces cerevisiae strain YJM789.</title>
        <authorList>
            <person name="Wei W."/>
            <person name="McCusker J.H."/>
            <person name="Hyman R.W."/>
            <person name="Jones T."/>
            <person name="Ning Y."/>
            <person name="Cao Z."/>
            <person name="Gu Z."/>
            <person name="Bruno D."/>
            <person name="Miranda M."/>
            <person name="Nguyen M."/>
            <person name="Wilhelmy J."/>
            <person name="Komp C."/>
            <person name="Tamse R."/>
            <person name="Wang X."/>
            <person name="Jia P."/>
            <person name="Luedi P."/>
            <person name="Oefner P.J."/>
            <person name="David L."/>
            <person name="Dietrich F.S."/>
            <person name="Li Y."/>
            <person name="Davis R.W."/>
            <person name="Steinmetz L.M."/>
        </authorList>
    </citation>
    <scope>NUCLEOTIDE SEQUENCE [LARGE SCALE GENOMIC DNA]</scope>
    <source>
        <strain>YJM789</strain>
    </source>
</reference>
<gene>
    <name evidence="2" type="primary">RPS0A</name>
    <name type="synonym">NAB1</name>
    <name type="synonym">NAB1A</name>
    <name type="synonym">YST1</name>
    <name type="ORF">SCY_2108</name>
</gene>
<comment type="function">
    <text evidence="2">Required for the assembly and/or stability of the 40S ribosomal subunit. Required for the processing of the 20S rRNA-precursor to mature 18S rRNA in a late step of the maturation of 40S ribosomal subunits.</text>
</comment>
<comment type="subunit">
    <text evidence="2">Component of the small ribosomal subunit. Mature ribosomes consist of a small (40S) and a large (60S) subunit. The 40S subunit contains about 33 different proteins and 1 molecule of RNA (18S). The 60S subunit contains about 49 different proteins and 3 molecules of RNA (25S, 5.8S and 5S). Interacts with RPS21.</text>
</comment>
<comment type="subcellular location">
    <subcellularLocation>
        <location evidence="2">Cytoplasm</location>
    </subcellularLocation>
</comment>
<comment type="similarity">
    <text evidence="2">Belongs to the universal ribosomal protein uS2 family.</text>
</comment>
<dbReference type="EMBL" id="AAFW02000100">
    <property type="protein sequence ID" value="EDN61802.1"/>
    <property type="molecule type" value="Genomic_DNA"/>
</dbReference>
<dbReference type="SMR" id="A6ZUM5"/>
<dbReference type="HOGENOM" id="CLU_058171_2_0_1"/>
<dbReference type="Proteomes" id="UP000007060">
    <property type="component" value="Unassembled WGS sequence"/>
</dbReference>
<dbReference type="GO" id="GO:0022627">
    <property type="term" value="C:cytosolic small ribosomal subunit"/>
    <property type="evidence" value="ECO:0007669"/>
    <property type="project" value="UniProtKB-UniRule"/>
</dbReference>
<dbReference type="GO" id="GO:0003735">
    <property type="term" value="F:structural constituent of ribosome"/>
    <property type="evidence" value="ECO:0007669"/>
    <property type="project" value="UniProtKB-UniRule"/>
</dbReference>
<dbReference type="GO" id="GO:0000028">
    <property type="term" value="P:ribosomal small subunit assembly"/>
    <property type="evidence" value="ECO:0007669"/>
    <property type="project" value="UniProtKB-UniRule"/>
</dbReference>
<dbReference type="GO" id="GO:0006412">
    <property type="term" value="P:translation"/>
    <property type="evidence" value="ECO:0007669"/>
    <property type="project" value="UniProtKB-UniRule"/>
</dbReference>
<dbReference type="CDD" id="cd01425">
    <property type="entry name" value="RPS2"/>
    <property type="match status" value="1"/>
</dbReference>
<dbReference type="FunFam" id="3.40.50.10490:FF:000010">
    <property type="entry name" value="40S ribosomal protein S0"/>
    <property type="match status" value="1"/>
</dbReference>
<dbReference type="Gene3D" id="3.40.50.10490">
    <property type="entry name" value="Glucose-6-phosphate isomerase like protein, domain 1"/>
    <property type="match status" value="1"/>
</dbReference>
<dbReference type="HAMAP" id="MF_03015">
    <property type="entry name" value="Ribosomal_S2_euk"/>
    <property type="match status" value="1"/>
</dbReference>
<dbReference type="InterPro" id="IPR001865">
    <property type="entry name" value="Ribosomal_uS2"/>
</dbReference>
<dbReference type="InterPro" id="IPR018130">
    <property type="entry name" value="Ribosomal_uS2_CS"/>
</dbReference>
<dbReference type="InterPro" id="IPR027498">
    <property type="entry name" value="Ribosomal_uS2_euk"/>
</dbReference>
<dbReference type="InterPro" id="IPR005707">
    <property type="entry name" value="Ribosomal_uS2_euk/arc"/>
</dbReference>
<dbReference type="InterPro" id="IPR023591">
    <property type="entry name" value="Ribosomal_uS2_flav_dom_sf"/>
</dbReference>
<dbReference type="NCBIfam" id="TIGR01012">
    <property type="entry name" value="uS2_euk_arch"/>
    <property type="match status" value="1"/>
</dbReference>
<dbReference type="PANTHER" id="PTHR11489">
    <property type="entry name" value="40S RIBOSOMAL PROTEIN SA"/>
    <property type="match status" value="1"/>
</dbReference>
<dbReference type="Pfam" id="PF00318">
    <property type="entry name" value="Ribosomal_S2"/>
    <property type="match status" value="2"/>
</dbReference>
<dbReference type="PRINTS" id="PR00395">
    <property type="entry name" value="RIBOSOMALS2"/>
</dbReference>
<dbReference type="SUPFAM" id="SSF52313">
    <property type="entry name" value="Ribosomal protein S2"/>
    <property type="match status" value="1"/>
</dbReference>
<dbReference type="PROSITE" id="PS00962">
    <property type="entry name" value="RIBOSOMAL_S2_1"/>
    <property type="match status" value="1"/>
</dbReference>
<dbReference type="PROSITE" id="PS00963">
    <property type="entry name" value="RIBOSOMAL_S2_2"/>
    <property type="match status" value="1"/>
</dbReference>
<keyword id="KW-0007">Acetylation</keyword>
<keyword id="KW-0963">Cytoplasm</keyword>
<keyword id="KW-0687">Ribonucleoprotein</keyword>
<keyword id="KW-0689">Ribosomal protein</keyword>
<name>RSSA1_YEAS7</name>